<sequence>MHDKILILDFGSQVTQLIARRVREAHVYCEIHPNDVSDDFVREFAPKGVILSGSHASTYEDHQLRAPQAVWDLGVPVLGICYGMQTMAVQLGGKVEWSDHREFGYAEVRAHGRTRLLDGIQDFATPEGHGMLKVWMSHGDKVGEMPPGFALMASTPSCPIAGMADEARGYYAVQFHPEVTHTVQGRKLLERFVLDIAGAKPDWIMRDHIEEAVARIREQVGDEEVILGLSGGVDSSVAAALIHRAIGDQLTCVFVDHGLLRLNEGKMVLDMFEGRLHAKVVHVDASEQFLGHLAGVADPEHKRKIIGREFVEVFQAEAKKLTNAKWLAQGTIYPDVIESGGAKTKKATTIKSHHNVGGLPETLGLKLLEPLRDLFKDEVRELGVALGLPAEMVYRHPFPGPGLGVRILGEVKRDYAELLRRADAIFIEELRGTLATEQDAAAGLCEPSQVGKSWYDLTSQAFAVFLPVKSVGVMGDGRTYDYVAALRAVQTTDFMTAHWAHLPYALLGRASNRIINEVRGINRVVYDVSGKPPATIEWE</sequence>
<comment type="function">
    <text evidence="1">Catalyzes the synthesis of GMP from XMP.</text>
</comment>
<comment type="catalytic activity">
    <reaction evidence="1">
        <text>XMP + L-glutamine + ATP + H2O = GMP + L-glutamate + AMP + diphosphate + 2 H(+)</text>
        <dbReference type="Rhea" id="RHEA:11680"/>
        <dbReference type="ChEBI" id="CHEBI:15377"/>
        <dbReference type="ChEBI" id="CHEBI:15378"/>
        <dbReference type="ChEBI" id="CHEBI:29985"/>
        <dbReference type="ChEBI" id="CHEBI:30616"/>
        <dbReference type="ChEBI" id="CHEBI:33019"/>
        <dbReference type="ChEBI" id="CHEBI:57464"/>
        <dbReference type="ChEBI" id="CHEBI:58115"/>
        <dbReference type="ChEBI" id="CHEBI:58359"/>
        <dbReference type="ChEBI" id="CHEBI:456215"/>
        <dbReference type="EC" id="6.3.5.2"/>
    </reaction>
</comment>
<comment type="pathway">
    <text evidence="1">Purine metabolism; GMP biosynthesis; GMP from XMP (L-Gln route): step 1/1.</text>
</comment>
<comment type="subunit">
    <text evidence="1">Homodimer.</text>
</comment>
<keyword id="KW-0067">ATP-binding</keyword>
<keyword id="KW-0315">Glutamine amidotransferase</keyword>
<keyword id="KW-0332">GMP biosynthesis</keyword>
<keyword id="KW-0436">Ligase</keyword>
<keyword id="KW-0547">Nucleotide-binding</keyword>
<keyword id="KW-0658">Purine biosynthesis</keyword>
<feature type="chain" id="PRO_1000120239" description="GMP synthase [glutamine-hydrolyzing]">
    <location>
        <begin position="1"/>
        <end position="539"/>
    </location>
</feature>
<feature type="domain" description="Glutamine amidotransferase type-1" evidence="1">
    <location>
        <begin position="4"/>
        <end position="202"/>
    </location>
</feature>
<feature type="domain" description="GMPS ATP-PPase" evidence="1">
    <location>
        <begin position="203"/>
        <end position="395"/>
    </location>
</feature>
<feature type="active site" description="Nucleophile" evidence="1">
    <location>
        <position position="81"/>
    </location>
</feature>
<feature type="active site" evidence="1">
    <location>
        <position position="176"/>
    </location>
</feature>
<feature type="active site" evidence="1">
    <location>
        <position position="178"/>
    </location>
</feature>
<feature type="binding site" evidence="1">
    <location>
        <begin position="230"/>
        <end position="236"/>
    </location>
    <ligand>
        <name>ATP</name>
        <dbReference type="ChEBI" id="CHEBI:30616"/>
    </ligand>
</feature>
<organism>
    <name type="scientific">Burkholderia pseudomallei (strain 1106a)</name>
    <dbReference type="NCBI Taxonomy" id="357348"/>
    <lineage>
        <taxon>Bacteria</taxon>
        <taxon>Pseudomonadati</taxon>
        <taxon>Pseudomonadota</taxon>
        <taxon>Betaproteobacteria</taxon>
        <taxon>Burkholderiales</taxon>
        <taxon>Burkholderiaceae</taxon>
        <taxon>Burkholderia</taxon>
        <taxon>pseudomallei group</taxon>
    </lineage>
</organism>
<dbReference type="EC" id="6.3.5.2" evidence="1"/>
<dbReference type="EMBL" id="CP000572">
    <property type="protein sequence ID" value="ABN92213.1"/>
    <property type="molecule type" value="Genomic_DNA"/>
</dbReference>
<dbReference type="RefSeq" id="WP_004193192.1">
    <property type="nucleotide sequence ID" value="NC_009076.1"/>
</dbReference>
<dbReference type="SMR" id="A3NWJ3"/>
<dbReference type="GeneID" id="93060667"/>
<dbReference type="KEGG" id="bpl:BURPS1106A_2454"/>
<dbReference type="HOGENOM" id="CLU_014340_0_5_4"/>
<dbReference type="UniPathway" id="UPA00189">
    <property type="reaction ID" value="UER00296"/>
</dbReference>
<dbReference type="Proteomes" id="UP000006738">
    <property type="component" value="Chromosome I"/>
</dbReference>
<dbReference type="GO" id="GO:0005829">
    <property type="term" value="C:cytosol"/>
    <property type="evidence" value="ECO:0007669"/>
    <property type="project" value="TreeGrafter"/>
</dbReference>
<dbReference type="GO" id="GO:0005524">
    <property type="term" value="F:ATP binding"/>
    <property type="evidence" value="ECO:0007669"/>
    <property type="project" value="UniProtKB-UniRule"/>
</dbReference>
<dbReference type="GO" id="GO:0003921">
    <property type="term" value="F:GMP synthase activity"/>
    <property type="evidence" value="ECO:0007669"/>
    <property type="project" value="InterPro"/>
</dbReference>
<dbReference type="CDD" id="cd01742">
    <property type="entry name" value="GATase1_GMP_Synthase"/>
    <property type="match status" value="1"/>
</dbReference>
<dbReference type="CDD" id="cd01997">
    <property type="entry name" value="GMP_synthase_C"/>
    <property type="match status" value="1"/>
</dbReference>
<dbReference type="FunFam" id="3.30.300.10:FF:000002">
    <property type="entry name" value="GMP synthase [glutamine-hydrolyzing]"/>
    <property type="match status" value="1"/>
</dbReference>
<dbReference type="FunFam" id="3.40.50.620:FF:000001">
    <property type="entry name" value="GMP synthase [glutamine-hydrolyzing]"/>
    <property type="match status" value="1"/>
</dbReference>
<dbReference type="FunFam" id="3.40.50.880:FF:000001">
    <property type="entry name" value="GMP synthase [glutamine-hydrolyzing]"/>
    <property type="match status" value="1"/>
</dbReference>
<dbReference type="Gene3D" id="3.30.300.10">
    <property type="match status" value="1"/>
</dbReference>
<dbReference type="Gene3D" id="3.40.50.880">
    <property type="match status" value="1"/>
</dbReference>
<dbReference type="Gene3D" id="3.40.50.620">
    <property type="entry name" value="HUPs"/>
    <property type="match status" value="1"/>
</dbReference>
<dbReference type="HAMAP" id="MF_00344">
    <property type="entry name" value="GMP_synthase"/>
    <property type="match status" value="1"/>
</dbReference>
<dbReference type="InterPro" id="IPR029062">
    <property type="entry name" value="Class_I_gatase-like"/>
</dbReference>
<dbReference type="InterPro" id="IPR017926">
    <property type="entry name" value="GATASE"/>
</dbReference>
<dbReference type="InterPro" id="IPR001674">
    <property type="entry name" value="GMP_synth_C"/>
</dbReference>
<dbReference type="InterPro" id="IPR004739">
    <property type="entry name" value="GMP_synth_GATase"/>
</dbReference>
<dbReference type="InterPro" id="IPR022955">
    <property type="entry name" value="GMP_synthase"/>
</dbReference>
<dbReference type="InterPro" id="IPR025777">
    <property type="entry name" value="GMPS_ATP_PPase_dom"/>
</dbReference>
<dbReference type="InterPro" id="IPR022310">
    <property type="entry name" value="NAD/GMP_synthase"/>
</dbReference>
<dbReference type="InterPro" id="IPR014729">
    <property type="entry name" value="Rossmann-like_a/b/a_fold"/>
</dbReference>
<dbReference type="NCBIfam" id="TIGR00884">
    <property type="entry name" value="guaA_Cterm"/>
    <property type="match status" value="1"/>
</dbReference>
<dbReference type="NCBIfam" id="TIGR00888">
    <property type="entry name" value="guaA_Nterm"/>
    <property type="match status" value="1"/>
</dbReference>
<dbReference type="NCBIfam" id="NF000848">
    <property type="entry name" value="PRK00074.1"/>
    <property type="match status" value="1"/>
</dbReference>
<dbReference type="PANTHER" id="PTHR11922:SF2">
    <property type="entry name" value="GMP SYNTHASE [GLUTAMINE-HYDROLYZING]"/>
    <property type="match status" value="1"/>
</dbReference>
<dbReference type="PANTHER" id="PTHR11922">
    <property type="entry name" value="GMP SYNTHASE-RELATED"/>
    <property type="match status" value="1"/>
</dbReference>
<dbReference type="Pfam" id="PF00117">
    <property type="entry name" value="GATase"/>
    <property type="match status" value="1"/>
</dbReference>
<dbReference type="Pfam" id="PF00958">
    <property type="entry name" value="GMP_synt_C"/>
    <property type="match status" value="1"/>
</dbReference>
<dbReference type="Pfam" id="PF02540">
    <property type="entry name" value="NAD_synthase"/>
    <property type="match status" value="1"/>
</dbReference>
<dbReference type="SUPFAM" id="SSF52402">
    <property type="entry name" value="Adenine nucleotide alpha hydrolases-like"/>
    <property type="match status" value="1"/>
</dbReference>
<dbReference type="SUPFAM" id="SSF52317">
    <property type="entry name" value="Class I glutamine amidotransferase-like"/>
    <property type="match status" value="1"/>
</dbReference>
<dbReference type="SUPFAM" id="SSF54810">
    <property type="entry name" value="GMP synthetase C-terminal dimerisation domain"/>
    <property type="match status" value="1"/>
</dbReference>
<dbReference type="PROSITE" id="PS51273">
    <property type="entry name" value="GATASE_TYPE_1"/>
    <property type="match status" value="1"/>
</dbReference>
<dbReference type="PROSITE" id="PS51553">
    <property type="entry name" value="GMPS_ATP_PPASE"/>
    <property type="match status" value="1"/>
</dbReference>
<protein>
    <recommendedName>
        <fullName evidence="1">GMP synthase [glutamine-hydrolyzing]</fullName>
        <ecNumber evidence="1">6.3.5.2</ecNumber>
    </recommendedName>
    <alternativeName>
        <fullName evidence="1">GMP synthetase</fullName>
    </alternativeName>
    <alternativeName>
        <fullName evidence="1">Glutamine amidotransferase</fullName>
    </alternativeName>
</protein>
<reference key="1">
    <citation type="journal article" date="2010" name="Genome Biol. Evol.">
        <title>Continuing evolution of Burkholderia mallei through genome reduction and large-scale rearrangements.</title>
        <authorList>
            <person name="Losada L."/>
            <person name="Ronning C.M."/>
            <person name="DeShazer D."/>
            <person name="Woods D."/>
            <person name="Fedorova N."/>
            <person name="Kim H.S."/>
            <person name="Shabalina S.A."/>
            <person name="Pearson T.R."/>
            <person name="Brinkac L."/>
            <person name="Tan P."/>
            <person name="Nandi T."/>
            <person name="Crabtree J."/>
            <person name="Badger J."/>
            <person name="Beckstrom-Sternberg S."/>
            <person name="Saqib M."/>
            <person name="Schutzer S.E."/>
            <person name="Keim P."/>
            <person name="Nierman W.C."/>
        </authorList>
    </citation>
    <scope>NUCLEOTIDE SEQUENCE [LARGE SCALE GENOMIC DNA]</scope>
    <source>
        <strain>1106a</strain>
    </source>
</reference>
<evidence type="ECO:0000255" key="1">
    <source>
        <dbReference type="HAMAP-Rule" id="MF_00344"/>
    </source>
</evidence>
<name>GUAA_BURP0</name>
<accession>A3NWJ3</accession>
<proteinExistence type="inferred from homology"/>
<gene>
    <name evidence="1" type="primary">guaA</name>
    <name type="ordered locus">BURPS1106A_2454</name>
</gene>